<keyword id="KW-0150">Chloroplast</keyword>
<keyword id="KW-0472">Membrane</keyword>
<keyword id="KW-0602">Photosynthesis</keyword>
<keyword id="KW-0604">Photosystem II</keyword>
<keyword id="KW-0934">Plastid</keyword>
<keyword id="KW-0674">Reaction center</keyword>
<keyword id="KW-0793">Thylakoid</keyword>
<keyword id="KW-0812">Transmembrane</keyword>
<keyword id="KW-1133">Transmembrane helix</keyword>
<geneLocation type="chloroplast"/>
<protein>
    <recommendedName>
        <fullName evidence="1">Photosystem II reaction center protein L</fullName>
        <shortName evidence="1">PSII-L</shortName>
    </recommendedName>
</protein>
<name>PSBL_TROAR</name>
<accession>Q7J1A1</accession>
<dbReference type="EMBL" id="AF123842">
    <property type="protein sequence ID" value="AAG26248.1"/>
    <property type="molecule type" value="Genomic_DNA"/>
</dbReference>
<dbReference type="RefSeq" id="YP_008081472.1">
    <property type="nucleotide sequence ID" value="NC_021426.1"/>
</dbReference>
<dbReference type="SMR" id="Q7J1A1"/>
<dbReference type="GeneID" id="15823079"/>
<dbReference type="GO" id="GO:0009535">
    <property type="term" value="C:chloroplast thylakoid membrane"/>
    <property type="evidence" value="ECO:0007669"/>
    <property type="project" value="UniProtKB-SubCell"/>
</dbReference>
<dbReference type="GO" id="GO:0009539">
    <property type="term" value="C:photosystem II reaction center"/>
    <property type="evidence" value="ECO:0007669"/>
    <property type="project" value="InterPro"/>
</dbReference>
<dbReference type="GO" id="GO:0015979">
    <property type="term" value="P:photosynthesis"/>
    <property type="evidence" value="ECO:0007669"/>
    <property type="project" value="UniProtKB-UniRule"/>
</dbReference>
<dbReference type="HAMAP" id="MF_01317">
    <property type="entry name" value="PSII_PsbL"/>
    <property type="match status" value="1"/>
</dbReference>
<dbReference type="InterPro" id="IPR003372">
    <property type="entry name" value="PSII_PsbL"/>
</dbReference>
<dbReference type="InterPro" id="IPR037266">
    <property type="entry name" value="PSII_PsbL_sf"/>
</dbReference>
<dbReference type="NCBIfam" id="NF001972">
    <property type="entry name" value="PRK00753.1"/>
    <property type="match status" value="1"/>
</dbReference>
<dbReference type="Pfam" id="PF02419">
    <property type="entry name" value="PsbL"/>
    <property type="match status" value="1"/>
</dbReference>
<dbReference type="SUPFAM" id="SSF161017">
    <property type="entry name" value="Photosystem II reaction center protein L, PsbL"/>
    <property type="match status" value="1"/>
</dbReference>
<comment type="function">
    <text evidence="1">One of the components of the core complex of photosystem II (PSII). PSII is a light-driven water:plastoquinone oxidoreductase that uses light energy to abstract electrons from H(2)O, generating O(2) and a proton gradient subsequently used for ATP formation. It consists of a core antenna complex that captures photons, and an electron transfer chain that converts photonic excitation into a charge separation. This subunit is found at the monomer-monomer interface and is required for correct PSII assembly and/or dimerization.</text>
</comment>
<comment type="subunit">
    <text evidence="1">PSII is composed of 1 copy each of membrane proteins PsbA, PsbB, PsbC, PsbD, PsbE, PsbF, PsbH, PsbI, PsbJ, PsbK, PsbL, PsbM, PsbT, PsbX, PsbY, PsbZ, Psb30/Ycf12, at least 3 peripheral proteins of the oxygen-evolving complex and a large number of cofactors. It forms dimeric complexes.</text>
</comment>
<comment type="subcellular location">
    <subcellularLocation>
        <location evidence="1">Plastid</location>
        <location evidence="1">Chloroplast thylakoid membrane</location>
        <topology evidence="1">Single-pass membrane protein</topology>
    </subcellularLocation>
</comment>
<comment type="similarity">
    <text evidence="1">Belongs to the PsbL family.</text>
</comment>
<proteinExistence type="inferred from homology"/>
<organism>
    <name type="scientific">Trochodendron aralioides</name>
    <name type="common">Wheel tree</name>
    <dbReference type="NCBI Taxonomy" id="4407"/>
    <lineage>
        <taxon>Eukaryota</taxon>
        <taxon>Viridiplantae</taxon>
        <taxon>Streptophyta</taxon>
        <taxon>Embryophyta</taxon>
        <taxon>Tracheophyta</taxon>
        <taxon>Spermatophyta</taxon>
        <taxon>Magnoliopsida</taxon>
        <taxon>Trochodendrales</taxon>
        <taxon>Trochodendraceae</taxon>
        <taxon>Trochodendron</taxon>
    </lineage>
</organism>
<reference key="1">
    <citation type="journal article" date="2000" name="Am. J. Bot.">
        <title>Utility of 17 chloroplast genes for inferring the phylogeny of the basal angiosperms.</title>
        <authorList>
            <person name="Graham S.W."/>
            <person name="Olmstead R.G."/>
        </authorList>
    </citation>
    <scope>NUCLEOTIDE SEQUENCE [GENOMIC DNA]</scope>
</reference>
<evidence type="ECO:0000255" key="1">
    <source>
        <dbReference type="HAMAP-Rule" id="MF_01317"/>
    </source>
</evidence>
<gene>
    <name evidence="1" type="primary">psbL</name>
</gene>
<sequence length="38" mass="4497">MTQSNPNEQNVELNRTSLYWGLLLIFVLAVLFSNYFFN</sequence>
<feature type="chain" id="PRO_0000219779" description="Photosystem II reaction center protein L">
    <location>
        <begin position="1"/>
        <end position="38"/>
    </location>
</feature>
<feature type="transmembrane region" description="Helical" evidence="1">
    <location>
        <begin position="17"/>
        <end position="37"/>
    </location>
</feature>